<feature type="chain" id="PRO_0000409738" description="Suppressor of hydroxyurea sensitivity protein 2">
    <location>
        <begin position="1"/>
        <end position="223"/>
    </location>
</feature>
<organism>
    <name type="scientific">Saccharomyces cerevisiae (strain AWRI1631)</name>
    <name type="common">Baker's yeast</name>
    <dbReference type="NCBI Taxonomy" id="545124"/>
    <lineage>
        <taxon>Eukaryota</taxon>
        <taxon>Fungi</taxon>
        <taxon>Dikarya</taxon>
        <taxon>Ascomycota</taxon>
        <taxon>Saccharomycotina</taxon>
        <taxon>Saccharomycetes</taxon>
        <taxon>Saccharomycetales</taxon>
        <taxon>Saccharomycetaceae</taxon>
        <taxon>Saccharomyces</taxon>
    </lineage>
</organism>
<dbReference type="EMBL" id="ABSV01000425">
    <property type="protein sequence ID" value="EDZ73171.1"/>
    <property type="molecule type" value="Genomic_DNA"/>
</dbReference>
<dbReference type="SMR" id="B5VFX4"/>
<dbReference type="OrthoDB" id="38539at4893"/>
<dbReference type="Proteomes" id="UP000008988">
    <property type="component" value="Unassembled WGS sequence"/>
</dbReference>
<dbReference type="GO" id="GO:0005634">
    <property type="term" value="C:nucleus"/>
    <property type="evidence" value="ECO:0007669"/>
    <property type="project" value="UniProtKB-SubCell"/>
</dbReference>
<dbReference type="GO" id="GO:0006310">
    <property type="term" value="P:DNA recombination"/>
    <property type="evidence" value="ECO:0007669"/>
    <property type="project" value="UniProtKB-KW"/>
</dbReference>
<dbReference type="GO" id="GO:0006281">
    <property type="term" value="P:DNA repair"/>
    <property type="evidence" value="ECO:0007669"/>
    <property type="project" value="UniProtKB-KW"/>
</dbReference>
<evidence type="ECO:0000250" key="1"/>
<evidence type="ECO:0000305" key="2"/>
<name>SHU2_YEAS6</name>
<keyword id="KW-0227">DNA damage</keyword>
<keyword id="KW-0233">DNA recombination</keyword>
<keyword id="KW-0234">DNA repair</keyword>
<keyword id="KW-0539">Nucleus</keyword>
<proteinExistence type="inferred from homology"/>
<gene>
    <name type="primary">SHU2</name>
    <name type="ORF">AWRI1631_42970</name>
</gene>
<sequence length="223" mass="26107">MSKDVIEYSKLFAKLVNTNDDTKLDDTIASFLYYMFPRELFIRAISLLESSDMFIYILDRVHNKEGNEHTSLIDVLVDEFYKGSSNSLLEYRLIVKDTNDGAPPILVDIAHWFCSCEEFCKYFHEALEKTDEKVELHDVLINEVDDHLQFSDDRFAQLDPHSLSKQWYFKFDKICCSHLLAFSILLRSSINVLKFFTVNSNKVFVIAIDNIDEWLNLHINIVE</sequence>
<reference key="1">
    <citation type="journal article" date="2008" name="FEMS Yeast Res.">
        <title>Comparative genome analysis of a Saccharomyces cerevisiae wine strain.</title>
        <authorList>
            <person name="Borneman A.R."/>
            <person name="Forgan A.H."/>
            <person name="Pretorius I.S."/>
            <person name="Chambers P.J."/>
        </authorList>
    </citation>
    <scope>NUCLEOTIDE SEQUENCE [LARGE SCALE GENOMIC DNA]</scope>
    <source>
        <strain>AWRI1631</strain>
    </source>
</reference>
<accession>B5VFX4</accession>
<comment type="function">
    <text evidence="1">Plays a role in a RAD51/RAD54-dependent homologous recombination repair (HRR) pathway to repair MMS-induced lesions during S-phase. Required for error-free repair of spontaneous and induced DNA lesions to protect the genome from mutation (By similarity).</text>
</comment>
<comment type="subunit">
    <text evidence="1">Component of the SHU complex composed of at least CSM2, PSY3, SHU1 and SHU2.</text>
</comment>
<comment type="subcellular location">
    <subcellularLocation>
        <location evidence="1">Nucleus</location>
    </subcellularLocation>
</comment>
<comment type="similarity">
    <text evidence="2">Belongs to the SHU2 family.</text>
</comment>
<protein>
    <recommendedName>
        <fullName>Suppressor of hydroxyurea sensitivity protein 2</fullName>
    </recommendedName>
</protein>